<accession>B6YRS4</accession>
<dbReference type="EC" id="6.1.1.4" evidence="1"/>
<dbReference type="EMBL" id="AP010656">
    <property type="protein sequence ID" value="BAG83896.1"/>
    <property type="molecule type" value="Genomic_DNA"/>
</dbReference>
<dbReference type="RefSeq" id="WP_012573656.1">
    <property type="nucleotide sequence ID" value="NC_011565.1"/>
</dbReference>
<dbReference type="SMR" id="B6YRS4"/>
<dbReference type="STRING" id="511995.CFPG_633"/>
<dbReference type="KEGG" id="aps:CFPG_633"/>
<dbReference type="eggNOG" id="COG0495">
    <property type="taxonomic scope" value="Bacteria"/>
</dbReference>
<dbReference type="HOGENOM" id="CLU_004427_0_0_10"/>
<dbReference type="OrthoDB" id="9810365at2"/>
<dbReference type="Proteomes" id="UP000000723">
    <property type="component" value="Chromosome"/>
</dbReference>
<dbReference type="GO" id="GO:0005829">
    <property type="term" value="C:cytosol"/>
    <property type="evidence" value="ECO:0007669"/>
    <property type="project" value="TreeGrafter"/>
</dbReference>
<dbReference type="GO" id="GO:0002161">
    <property type="term" value="F:aminoacyl-tRNA deacylase activity"/>
    <property type="evidence" value="ECO:0007669"/>
    <property type="project" value="InterPro"/>
</dbReference>
<dbReference type="GO" id="GO:0005524">
    <property type="term" value="F:ATP binding"/>
    <property type="evidence" value="ECO:0007669"/>
    <property type="project" value="UniProtKB-UniRule"/>
</dbReference>
<dbReference type="GO" id="GO:0004823">
    <property type="term" value="F:leucine-tRNA ligase activity"/>
    <property type="evidence" value="ECO:0007669"/>
    <property type="project" value="UniProtKB-UniRule"/>
</dbReference>
<dbReference type="GO" id="GO:0006429">
    <property type="term" value="P:leucyl-tRNA aminoacylation"/>
    <property type="evidence" value="ECO:0007669"/>
    <property type="project" value="UniProtKB-UniRule"/>
</dbReference>
<dbReference type="CDD" id="cd07958">
    <property type="entry name" value="Anticodon_Ia_Leu_BEm"/>
    <property type="match status" value="1"/>
</dbReference>
<dbReference type="FunFam" id="3.40.50.620:FF:000056">
    <property type="entry name" value="Leucine--tRNA ligase"/>
    <property type="match status" value="1"/>
</dbReference>
<dbReference type="FunFam" id="3.40.50.620:FF:000060">
    <property type="entry name" value="Leucine--tRNA ligase"/>
    <property type="match status" value="1"/>
</dbReference>
<dbReference type="FunFam" id="3.40.50.620:FF:000154">
    <property type="entry name" value="Leucine--tRNA ligase"/>
    <property type="match status" value="1"/>
</dbReference>
<dbReference type="FunFam" id="1.10.730.10:FF:000011">
    <property type="entry name" value="Leucine--tRNA ligase chloroplastic/mitochondrial"/>
    <property type="match status" value="1"/>
</dbReference>
<dbReference type="Gene3D" id="3.40.50.620">
    <property type="entry name" value="HUPs"/>
    <property type="match status" value="3"/>
</dbReference>
<dbReference type="Gene3D" id="1.10.730.10">
    <property type="entry name" value="Isoleucyl-tRNA Synthetase, Domain 1"/>
    <property type="match status" value="2"/>
</dbReference>
<dbReference type="HAMAP" id="MF_00049_B">
    <property type="entry name" value="Leu_tRNA_synth_B"/>
    <property type="match status" value="1"/>
</dbReference>
<dbReference type="InterPro" id="IPR002300">
    <property type="entry name" value="aa-tRNA-synth_Ia"/>
</dbReference>
<dbReference type="InterPro" id="IPR002302">
    <property type="entry name" value="Leu-tRNA-ligase"/>
</dbReference>
<dbReference type="InterPro" id="IPR025709">
    <property type="entry name" value="Leu_tRNA-synth_edit"/>
</dbReference>
<dbReference type="InterPro" id="IPR013155">
    <property type="entry name" value="M/V/L/I-tRNA-synth_anticd-bd"/>
</dbReference>
<dbReference type="InterPro" id="IPR014729">
    <property type="entry name" value="Rossmann-like_a/b/a_fold"/>
</dbReference>
<dbReference type="InterPro" id="IPR009080">
    <property type="entry name" value="tRNAsynth_Ia_anticodon-bd"/>
</dbReference>
<dbReference type="InterPro" id="IPR009008">
    <property type="entry name" value="Val/Leu/Ile-tRNA-synth_edit"/>
</dbReference>
<dbReference type="NCBIfam" id="TIGR00396">
    <property type="entry name" value="leuS_bact"/>
    <property type="match status" value="1"/>
</dbReference>
<dbReference type="PANTHER" id="PTHR43740:SF2">
    <property type="entry name" value="LEUCINE--TRNA LIGASE, MITOCHONDRIAL"/>
    <property type="match status" value="1"/>
</dbReference>
<dbReference type="PANTHER" id="PTHR43740">
    <property type="entry name" value="LEUCYL-TRNA SYNTHETASE"/>
    <property type="match status" value="1"/>
</dbReference>
<dbReference type="Pfam" id="PF08264">
    <property type="entry name" value="Anticodon_1"/>
    <property type="match status" value="1"/>
</dbReference>
<dbReference type="Pfam" id="PF00133">
    <property type="entry name" value="tRNA-synt_1"/>
    <property type="match status" value="1"/>
</dbReference>
<dbReference type="Pfam" id="PF13603">
    <property type="entry name" value="tRNA-synt_1_2"/>
    <property type="match status" value="1"/>
</dbReference>
<dbReference type="PRINTS" id="PR00985">
    <property type="entry name" value="TRNASYNTHLEU"/>
</dbReference>
<dbReference type="SUPFAM" id="SSF47323">
    <property type="entry name" value="Anticodon-binding domain of a subclass of class I aminoacyl-tRNA synthetases"/>
    <property type="match status" value="1"/>
</dbReference>
<dbReference type="SUPFAM" id="SSF52374">
    <property type="entry name" value="Nucleotidylyl transferase"/>
    <property type="match status" value="1"/>
</dbReference>
<dbReference type="SUPFAM" id="SSF50677">
    <property type="entry name" value="ValRS/IleRS/LeuRS editing domain"/>
    <property type="match status" value="1"/>
</dbReference>
<evidence type="ECO:0000255" key="1">
    <source>
        <dbReference type="HAMAP-Rule" id="MF_00049"/>
    </source>
</evidence>
<sequence length="918" mass="106760">MKYDFDAIEKKWQKYWKENRTYQVNIDRNKPKYYVLDMFPYPSGVGLHVGHPLGYIASDIYARYKRLKGFNVLHPMGYDAYGLPAEQYAIQTGQHPSITTKENINRYRKQLDKIGFCFDWDREIRTCDPKYYQWTQWVFIQMFNSYYCKEAQRARPITELVKILENQGTGGLHLACTKEIHLTANEWQMKDEKSKQAILMNYRIAYLSDIVVNWCPALGTVLANDEISGGISIRGGYTVEQRKMRQWCLRISAYAKRLLEGLDKIEWTDSLKKMQRNWIGRSEGVELRFKIKDENIEFMIFTTRPETIFGVTFIVIAPESEWLTQTIISKKKDSVDSYLNLVKRRTERERISNRKVTGVFTGSYAVHPISGETIPIWISDYILADYGTGAVMAVPAHDSRDYAFAKHFDLPIIPLIEDIDISKESFDIKEGIMTNSDFLNGLSVKQAIQKVKEYIKDENLGKIKVNYRLRDAIFSRQRYWGEPFPIYYKNGIPYAVDEEDLPIKLPEIDKFLPAETGKPPLGRAKNWTYKGYPLELTTMPGFAGSSAYYLRYEDPHNSECLVSSEANEYWQNVDLYIGGIEHATGHLIYSRFWNKFLFDLGIVAKEEPFKKLINQGMIQGRSNFVYRIKNTNTFVSYGLKHQYDVTPIHVDINLVFDDVLNIESFRDWNSEYKNAEFILENGKYVCGWAIEKMSKSMFNTVSPDNIVNRFGADAFRLYEMFLGPLEQSKPWDTKGIDGIARFLKRLWNLFFENDVLKVSNSLPLDKELKSIHKLIKKVSWDIENFSFNTSVAAFMICINELTLLKCSKHSILSDLVIVLAPFAPHIAEELWHLLGNEATIFDSQFPKCNEEYLKEENVKYTVSFNGKARFILNFPKKISEENVKDTVLKCESSKKWLKNKIPKKIIIIPNKIVNIVFD</sequence>
<gene>
    <name evidence="1" type="primary">leuS</name>
    <name type="ordered locus">CFPG_633</name>
</gene>
<reference key="1">
    <citation type="journal article" date="2008" name="Science">
        <title>Genome of an endosymbiont coupling N2 fixation to cellulolysis within RT protist cells in termite gut.</title>
        <authorList>
            <person name="Hongoh Y."/>
            <person name="Sharma V.K."/>
            <person name="Prakash T."/>
            <person name="Noda S."/>
            <person name="Toh H."/>
            <person name="Taylor T.D."/>
            <person name="Kudo T."/>
            <person name="Sakaki Y."/>
            <person name="Toyoda A."/>
            <person name="Hattori M."/>
            <person name="Ohkuma M."/>
        </authorList>
    </citation>
    <scope>NUCLEOTIDE SEQUENCE [LARGE SCALE GENOMIC DNA]</scope>
</reference>
<protein>
    <recommendedName>
        <fullName evidence="1">Leucine--tRNA ligase</fullName>
        <ecNumber evidence="1">6.1.1.4</ecNumber>
    </recommendedName>
    <alternativeName>
        <fullName evidence="1">Leucyl-tRNA synthetase</fullName>
        <shortName evidence="1">LeuRS</shortName>
    </alternativeName>
</protein>
<comment type="catalytic activity">
    <reaction evidence="1">
        <text>tRNA(Leu) + L-leucine + ATP = L-leucyl-tRNA(Leu) + AMP + diphosphate</text>
        <dbReference type="Rhea" id="RHEA:11688"/>
        <dbReference type="Rhea" id="RHEA-COMP:9613"/>
        <dbReference type="Rhea" id="RHEA-COMP:9622"/>
        <dbReference type="ChEBI" id="CHEBI:30616"/>
        <dbReference type="ChEBI" id="CHEBI:33019"/>
        <dbReference type="ChEBI" id="CHEBI:57427"/>
        <dbReference type="ChEBI" id="CHEBI:78442"/>
        <dbReference type="ChEBI" id="CHEBI:78494"/>
        <dbReference type="ChEBI" id="CHEBI:456215"/>
        <dbReference type="EC" id="6.1.1.4"/>
    </reaction>
</comment>
<comment type="subcellular location">
    <subcellularLocation>
        <location evidence="1">Cytoplasm</location>
    </subcellularLocation>
</comment>
<comment type="similarity">
    <text evidence="1">Belongs to the class-I aminoacyl-tRNA synthetase family.</text>
</comment>
<feature type="chain" id="PRO_1000091288" description="Leucine--tRNA ligase">
    <location>
        <begin position="1"/>
        <end position="918"/>
    </location>
</feature>
<feature type="short sequence motif" description="'HIGH' region">
    <location>
        <begin position="40"/>
        <end position="51"/>
    </location>
</feature>
<feature type="short sequence motif" description="'KMSKS' region">
    <location>
        <begin position="692"/>
        <end position="696"/>
    </location>
</feature>
<feature type="binding site" evidence="1">
    <location>
        <position position="695"/>
    </location>
    <ligand>
        <name>ATP</name>
        <dbReference type="ChEBI" id="CHEBI:30616"/>
    </ligand>
</feature>
<organism>
    <name type="scientific">Azobacteroides pseudotrichonymphae genomovar. CFP2</name>
    <dbReference type="NCBI Taxonomy" id="511995"/>
    <lineage>
        <taxon>Bacteria</taxon>
        <taxon>Pseudomonadati</taxon>
        <taxon>Bacteroidota</taxon>
        <taxon>Bacteroidia</taxon>
        <taxon>Bacteroidales</taxon>
        <taxon>Candidatus Azobacteroides</taxon>
    </lineage>
</organism>
<keyword id="KW-0030">Aminoacyl-tRNA synthetase</keyword>
<keyword id="KW-0067">ATP-binding</keyword>
<keyword id="KW-0963">Cytoplasm</keyword>
<keyword id="KW-0436">Ligase</keyword>
<keyword id="KW-0547">Nucleotide-binding</keyword>
<keyword id="KW-0648">Protein biosynthesis</keyword>
<keyword id="KW-1185">Reference proteome</keyword>
<name>SYL_AZOPC</name>
<proteinExistence type="inferred from homology"/>